<name>TFB2M_RAT</name>
<feature type="transit peptide" description="Mitochondrion" evidence="3">
    <location>
        <begin position="1"/>
        <end position="44"/>
    </location>
</feature>
<feature type="chain" id="PRO_0000273181" description="Dimethyladenosine transferase 2, mitochondrial">
    <location>
        <begin position="45"/>
        <end position="397"/>
    </location>
</feature>
<feature type="region of interest" description="DNA-binding" evidence="2">
    <location>
        <begin position="329"/>
        <end position="330"/>
    </location>
</feature>
<feature type="binding site" evidence="4">
    <location>
        <position position="75"/>
    </location>
    <ligand>
        <name>S-adenosyl-L-methionine</name>
        <dbReference type="ChEBI" id="CHEBI:59789"/>
    </ligand>
</feature>
<feature type="binding site" evidence="4">
    <location>
        <position position="124"/>
    </location>
    <ligand>
        <name>S-adenosyl-L-methionine</name>
        <dbReference type="ChEBI" id="CHEBI:59789"/>
    </ligand>
</feature>
<feature type="binding site" evidence="4">
    <location>
        <position position="150"/>
    </location>
    <ligand>
        <name>S-adenosyl-L-methionine</name>
        <dbReference type="ChEBI" id="CHEBI:59789"/>
    </ligand>
</feature>
<comment type="function">
    <text evidence="2">S-adenosyl-L-methionine-dependent rRNA methyltransferase which may methylate two specific adjacent adenosines in the loop of a conserved hairpin near the 3'-end of 12S mitochondrial rRNA. Component of the mitochondrial transcription initiation complex, composed at least of TFB2M, TFAM and POLRMT that is required for basal transcription of mitochondrial DNA. In this complex TFAM recruits POLRMT to a specific promoter whereas TFB2M induces structural changes in POLRMT to enable promoter opening and trapping of the DNA non-template strand. Stimulates transcription independently of the methyltransferase activity.</text>
</comment>
<comment type="catalytic activity">
    <reaction evidence="2">
        <text>adenosine in rRNA + S-adenosyl-L-methionine = N(6)-methyladenosine in rRNA + S-adenosyl-L-homocysteine + H(+)</text>
        <dbReference type="Rhea" id="RHEA:58728"/>
        <dbReference type="Rhea" id="RHEA-COMP:15198"/>
        <dbReference type="Rhea" id="RHEA-COMP:15199"/>
        <dbReference type="ChEBI" id="CHEBI:15378"/>
        <dbReference type="ChEBI" id="CHEBI:57856"/>
        <dbReference type="ChEBI" id="CHEBI:59789"/>
        <dbReference type="ChEBI" id="CHEBI:74411"/>
        <dbReference type="ChEBI" id="CHEBI:74449"/>
    </reaction>
</comment>
<comment type="subunit">
    <text evidence="2">Homodimer. Component of the mitochondrial transcription initiation complex, composed at least of TFB2M, TFAM and POLRMT. In this complex TFAM recruits POLRMT to the promoter whereas TFB2M induces structural changes in POLRMT to enable promoter opening and trapping of the DNA non-template strand. Interacts with mitochondrial RNA polymerase POLRMT. Interacts with TFAM.</text>
</comment>
<comment type="subcellular location">
    <subcellularLocation>
        <location evidence="1">Mitochondrion</location>
    </subcellularLocation>
</comment>
<comment type="similarity">
    <text evidence="4">Belongs to the class I-like SAM-binding methyltransferase superfamily. rRNA adenine N(6)-methyltransferase family. KsgA subfamily.</text>
</comment>
<reference key="1">
    <citation type="journal article" date="2004" name="Genome Res.">
        <title>The status, quality, and expansion of the NIH full-length cDNA project: the Mammalian Gene Collection (MGC).</title>
        <authorList>
            <consortium name="The MGC Project Team"/>
        </authorList>
    </citation>
    <scope>NUCLEOTIDE SEQUENCE [LARGE SCALE MRNA]</scope>
    <source>
        <tissue>Heart</tissue>
    </source>
</reference>
<protein>
    <recommendedName>
        <fullName evidence="5">Dimethyladenosine transferase 2, mitochondrial</fullName>
        <ecNumber evidence="2">2.1.1.-</ecNumber>
    </recommendedName>
    <alternativeName>
        <fullName>Mitochondrial 12S rRNA dimethylase 2</fullName>
    </alternativeName>
    <alternativeName>
        <fullName>Mitochondrial transcription factor B2</fullName>
        <shortName>mtTFB2</shortName>
    </alternativeName>
    <alternativeName>
        <fullName>S-adenosylmethionine-6-N', N'-adenosyl(rRNA) dimethyltransferase 2</fullName>
    </alternativeName>
</protein>
<evidence type="ECO:0000250" key="1"/>
<evidence type="ECO:0000250" key="2">
    <source>
        <dbReference type="UniProtKB" id="Q9H5Q4"/>
    </source>
</evidence>
<evidence type="ECO:0000255" key="3"/>
<evidence type="ECO:0000255" key="4">
    <source>
        <dbReference type="PROSITE-ProRule" id="PRU01026"/>
    </source>
</evidence>
<evidence type="ECO:0000305" key="5"/>
<evidence type="ECO:0000312" key="6">
    <source>
        <dbReference type="RGD" id="1307091"/>
    </source>
</evidence>
<proteinExistence type="evidence at transcript level"/>
<keyword id="KW-0489">Methyltransferase</keyword>
<keyword id="KW-0496">Mitochondrion</keyword>
<keyword id="KW-1185">Reference proteome</keyword>
<keyword id="KW-0694">RNA-binding</keyword>
<keyword id="KW-0698">rRNA processing</keyword>
<keyword id="KW-0949">S-adenosyl-L-methionine</keyword>
<keyword id="KW-0804">Transcription</keyword>
<keyword id="KW-0805">Transcription regulation</keyword>
<keyword id="KW-0808">Transferase</keyword>
<keyword id="KW-0809">Transit peptide</keyword>
<accession>Q5U2T7</accession>
<organism>
    <name type="scientific">Rattus norvegicus</name>
    <name type="common">Rat</name>
    <dbReference type="NCBI Taxonomy" id="10116"/>
    <lineage>
        <taxon>Eukaryota</taxon>
        <taxon>Metazoa</taxon>
        <taxon>Chordata</taxon>
        <taxon>Craniata</taxon>
        <taxon>Vertebrata</taxon>
        <taxon>Euteleostomi</taxon>
        <taxon>Mammalia</taxon>
        <taxon>Eutheria</taxon>
        <taxon>Euarchontoglires</taxon>
        <taxon>Glires</taxon>
        <taxon>Rodentia</taxon>
        <taxon>Myomorpha</taxon>
        <taxon>Muroidea</taxon>
        <taxon>Muridae</taxon>
        <taxon>Murinae</taxon>
        <taxon>Rattus</taxon>
    </lineage>
</organism>
<dbReference type="EC" id="2.1.1.-" evidence="2"/>
<dbReference type="EMBL" id="BC085870">
    <property type="protein sequence ID" value="AAH85870.1"/>
    <property type="molecule type" value="mRNA"/>
</dbReference>
<dbReference type="RefSeq" id="NP_001008294.1">
    <property type="nucleotide sequence ID" value="NM_001008293.1"/>
</dbReference>
<dbReference type="SMR" id="Q5U2T7"/>
<dbReference type="FunCoup" id="Q5U2T7">
    <property type="interactions" value="769"/>
</dbReference>
<dbReference type="STRING" id="10116.ENSRNOP00000003618"/>
<dbReference type="PhosphoSitePlus" id="Q5U2T7"/>
<dbReference type="PaxDb" id="10116-ENSRNOP00000003618"/>
<dbReference type="Ensembl" id="ENSRNOT00000003618.4">
    <property type="protein sequence ID" value="ENSRNOP00000003618.3"/>
    <property type="gene ID" value="ENSRNOG00000002695.4"/>
</dbReference>
<dbReference type="GeneID" id="289307"/>
<dbReference type="KEGG" id="rno:289307"/>
<dbReference type="AGR" id="RGD:1307091"/>
<dbReference type="CTD" id="64216"/>
<dbReference type="RGD" id="1307091">
    <property type="gene designation" value="Tfb2m"/>
</dbReference>
<dbReference type="eggNOG" id="KOG0820">
    <property type="taxonomic scope" value="Eukaryota"/>
</dbReference>
<dbReference type="GeneTree" id="ENSGT00950000183142"/>
<dbReference type="HOGENOM" id="CLU_051778_1_0_1"/>
<dbReference type="InParanoid" id="Q5U2T7"/>
<dbReference type="OMA" id="IFEVPWT"/>
<dbReference type="OrthoDB" id="9895503at2759"/>
<dbReference type="PhylomeDB" id="Q5U2T7"/>
<dbReference type="TreeFam" id="TF325100"/>
<dbReference type="Reactome" id="R-RNO-163282">
    <property type="pathway name" value="Mitochondrial transcription initiation"/>
</dbReference>
<dbReference type="PRO" id="PR:Q5U2T7"/>
<dbReference type="Proteomes" id="UP000002494">
    <property type="component" value="Chromosome 13"/>
</dbReference>
<dbReference type="Bgee" id="ENSRNOG00000002695">
    <property type="expression patterns" value="Expressed in heart and 19 other cell types or tissues"/>
</dbReference>
<dbReference type="GO" id="GO:0005759">
    <property type="term" value="C:mitochondrial matrix"/>
    <property type="evidence" value="ECO:0000266"/>
    <property type="project" value="RGD"/>
</dbReference>
<dbReference type="GO" id="GO:0042645">
    <property type="term" value="C:mitochondrial nucleoid"/>
    <property type="evidence" value="ECO:0000266"/>
    <property type="project" value="RGD"/>
</dbReference>
<dbReference type="GO" id="GO:0034246">
    <property type="term" value="F:mitochondrial transcription factor activity"/>
    <property type="evidence" value="ECO:0000250"/>
    <property type="project" value="UniProtKB"/>
</dbReference>
<dbReference type="GO" id="GO:0003723">
    <property type="term" value="F:RNA binding"/>
    <property type="evidence" value="ECO:0007669"/>
    <property type="project" value="UniProtKB-KW"/>
</dbReference>
<dbReference type="GO" id="GO:0000179">
    <property type="term" value="F:rRNA (adenine-N6,N6-)-dimethyltransferase activity"/>
    <property type="evidence" value="ECO:0000318"/>
    <property type="project" value="GO_Central"/>
</dbReference>
<dbReference type="GO" id="GO:0008988">
    <property type="term" value="F:rRNA (adenine-N6-)-methyltransferase activity"/>
    <property type="evidence" value="ECO:0007669"/>
    <property type="project" value="RHEA"/>
</dbReference>
<dbReference type="GO" id="GO:0006390">
    <property type="term" value="P:mitochondrial transcription"/>
    <property type="evidence" value="ECO:0000266"/>
    <property type="project" value="RGD"/>
</dbReference>
<dbReference type="GO" id="GO:0031167">
    <property type="term" value="P:rRNA methylation"/>
    <property type="evidence" value="ECO:0000318"/>
    <property type="project" value="GO_Central"/>
</dbReference>
<dbReference type="GO" id="GO:0006391">
    <property type="term" value="P:transcription initiation at mitochondrial promoter"/>
    <property type="evidence" value="ECO:0000250"/>
    <property type="project" value="UniProtKB"/>
</dbReference>
<dbReference type="FunFam" id="3.40.50.150:FF:000209">
    <property type="entry name" value="rRNA adenine N(6)-methyltransferase"/>
    <property type="match status" value="1"/>
</dbReference>
<dbReference type="Gene3D" id="3.40.50.150">
    <property type="entry name" value="Vaccinia Virus protein VP39"/>
    <property type="match status" value="1"/>
</dbReference>
<dbReference type="InterPro" id="IPR001737">
    <property type="entry name" value="KsgA/Erm"/>
</dbReference>
<dbReference type="InterPro" id="IPR020598">
    <property type="entry name" value="rRNA_Ade_methylase_Trfase_N"/>
</dbReference>
<dbReference type="InterPro" id="IPR029063">
    <property type="entry name" value="SAM-dependent_MTases_sf"/>
</dbReference>
<dbReference type="PANTHER" id="PTHR11727">
    <property type="entry name" value="DIMETHYLADENOSINE TRANSFERASE"/>
    <property type="match status" value="1"/>
</dbReference>
<dbReference type="PANTHER" id="PTHR11727:SF13">
    <property type="entry name" value="DIMETHYLADENOSINE TRANSFERASE 2, MITOCHONDRIAL"/>
    <property type="match status" value="1"/>
</dbReference>
<dbReference type="Pfam" id="PF00398">
    <property type="entry name" value="RrnaAD"/>
    <property type="match status" value="1"/>
</dbReference>
<dbReference type="PIRSF" id="PIRSF027833">
    <property type="entry name" value="MtTFB2"/>
    <property type="match status" value="1"/>
</dbReference>
<dbReference type="SMART" id="SM00650">
    <property type="entry name" value="rADc"/>
    <property type="match status" value="1"/>
</dbReference>
<dbReference type="SUPFAM" id="SSF53335">
    <property type="entry name" value="S-adenosyl-L-methionine-dependent methyltransferases"/>
    <property type="match status" value="1"/>
</dbReference>
<dbReference type="PROSITE" id="PS51689">
    <property type="entry name" value="SAM_RNA_A_N6_MT"/>
    <property type="match status" value="1"/>
</dbReference>
<gene>
    <name evidence="6" type="primary">Tfb2m</name>
</gene>
<sequence>MRGLAMRLPPRLALSVLAGRGPSCILGSGAATRKDWQERNRRSFSDLYTQPLPDCDFEESSSWTHKSRSEPTRHIACKKSARNLVRDLLEHQNPSHQLILECNPGPGILTGALLKAGARVVAFESEKMFIPHLESLRKNADGELQVVHCDFFKIDPRYQELVRPDVNSHTIFQNLGIKAVPWSAGVPIKVFGILPNKHERRLLWKILFDLYSCESIYRYGRVELNMFISEKEFRKLIATPKRPDLYQVLGVLWQVACEIKFLHMEPWSSFSVHAENGHLEKSKHSESLNLLKQNLYLVRMTPRRTLFTENLSPLNYDMFFHLVKHCFGKRNAPIIHHLRSLSTVDPINILRQIRKRPGDTAAKMYPHDFKRLFETIERSEDSVFKWIYDYCSDDSEL</sequence>